<evidence type="ECO:0000255" key="1">
    <source>
        <dbReference type="HAMAP-Rule" id="MF_04088"/>
    </source>
</evidence>
<organism>
    <name type="scientific">Rotavirus A (strain RVA/Human/United States/DS-1/1976/G2P1B[4])</name>
    <name type="common">RV-A</name>
    <name type="synonym">Rotavirus A (strain DS1)</name>
    <dbReference type="NCBI Taxonomy" id="10950"/>
    <lineage>
        <taxon>Viruses</taxon>
        <taxon>Riboviria</taxon>
        <taxon>Orthornavirae</taxon>
        <taxon>Duplornaviricota</taxon>
        <taxon>Resentoviricetes</taxon>
        <taxon>Reovirales</taxon>
        <taxon>Sedoreoviridae</taxon>
        <taxon>Rotavirus</taxon>
        <taxon>Rotavirus A</taxon>
    </lineage>
</organism>
<name>NSP1_ROTHD</name>
<feature type="chain" id="PRO_0000149555" description="Non-structural protein 1">
    <location>
        <begin position="1"/>
        <end position="486"/>
    </location>
</feature>
<feature type="region of interest" description="RNA-binding" evidence="1">
    <location>
        <begin position="1"/>
        <end position="81"/>
    </location>
</feature>
<feature type="region of interest" description="Zinc-binding domain" evidence="1">
    <location>
        <begin position="42"/>
        <end position="79"/>
    </location>
</feature>
<feature type="region of interest" description="Important for cytoskeleton localization" evidence="1">
    <location>
        <begin position="82"/>
        <end position="176"/>
    </location>
</feature>
<feature type="region of interest" description="Interaction with host IRF3" evidence="1">
    <location>
        <begin position="317"/>
        <end position="486"/>
    </location>
</feature>
<feature type="short sequence motif" description="pLxIS motif" evidence="1">
    <location>
        <begin position="480"/>
        <end position="483"/>
    </location>
</feature>
<feature type="sequence conflict" description="In Ref. 2; ABV53253." ref="2">
    <original>S</original>
    <variation>L</variation>
    <location>
        <position position="130"/>
    </location>
</feature>
<feature type="sequence conflict" description="In Ref. 2; ABV53253." ref="2">
    <original>I</original>
    <variation>T</variation>
    <location>
        <position position="331"/>
    </location>
</feature>
<feature type="sequence conflict" description="In Ref. 2; ABV53253." ref="2">
    <original>E</original>
    <variation>D</variation>
    <location>
        <position position="374"/>
    </location>
</feature>
<feature type="sequence conflict" description="In Ref. 2; ABV53253." ref="2">
    <original>R</original>
    <variation>G</variation>
    <location>
        <position position="481"/>
    </location>
</feature>
<sequence length="486" mass="57991">MATFKDACYQYKKLNKLNNAVLKLGANDVWRPSTLTKRKGWCLDCCQHTDLTYCQGCLIYHVCEWCSQYNRCFLDDDPHLLRMRTFRNEITKSDLENLINMYNTLFPINKKIVHKFANTIKQHKCRNEYSTQWYNHFLMPITLQSLSIELDGDIYYIFGYYDDMHKINQTPFSFTNLISKYDMLLLDSINFDRMAFLPLTLQQEYALRYFSKSRFITERRKCIEILHFSDNILDNLHNPNFTLQVIRNCSNMSVEWNKACNIIRNISDYFDILKSSHTEFYNISPRCRMFTQYKLKIASKLIKPNYVASNHNSLATEVHNCKWCSINNNSIVWNDFRIKNVYNDIFNFIRALVKSNLYVGHCSSEEKIYESIKEVLNVCKENEWNMLVTEMFNQLEPIKLNENNYILLNYEINWNVMNVLINSIGKIPKILTLSDVILILRIIIYDWFDIRFMRNTPMTTFTVNKLKQLYEKDRTAEHDSRISDIE</sequence>
<organismHost>
    <name type="scientific">Homo sapiens</name>
    <name type="common">Human</name>
    <dbReference type="NCBI Taxonomy" id="9606"/>
</organismHost>
<reference key="1">
    <citation type="journal article" date="1993" name="Virology">
        <title>Comparative analysis of the rotavirus NS53 gene: conservation of basic and cysteine-rich regions in the protein and possible stem-loop structures in the RNA.</title>
        <authorList>
            <person name="Hua J.J."/>
            <person name="Mansell E.E."/>
            <person name="Patton J.T."/>
        </authorList>
    </citation>
    <scope>NUCLEOTIDE SEQUENCE [GENOMIC RNA]</scope>
</reference>
<reference key="2">
    <citation type="journal article" date="2008" name="J. Virol.">
        <title>Group A human rotavirus genomics: evidence that gene constellations are influenced by viral protein interactions.</title>
        <authorList>
            <person name="Heiman E.M."/>
            <person name="McDonald S.M."/>
            <person name="Barro M."/>
            <person name="Taraporewala Z.F."/>
            <person name="Bar-Magen T."/>
            <person name="Patton J.T."/>
        </authorList>
    </citation>
    <scope>NUCLEOTIDE SEQUENCE [GENOMIC RNA]</scope>
</reference>
<comment type="function">
    <text evidence="1">Plays a role in the inhibition of host innate immunity by inducing the degradation of key host factors required to activate interferon production such as IRF3, IRF5 or IRF7. Associates with components of cullin RING ligases (CRLs) including CUL1 or CUL3, which are essential multisubunit ubiquitination complexes, to modulate their activities.</text>
</comment>
<comment type="subunit">
    <text evidence="1">Interacts (via C-terminus) with host IRF3; this interaction leads to IRF3 degradation. Interacts with host IRF7; this interaction leads to IRF7 degradation. Interacts with host CUL1 and CUL3.</text>
</comment>
<comment type="subcellular location">
    <subcellularLocation>
        <location evidence="1">Host cytoplasm</location>
        <location evidence="1">Host cytoskeleton</location>
    </subcellularLocation>
</comment>
<comment type="domain">
    <text evidence="1">The integrity of the zinc-binding domain in NSP1 is important for degradation of host IRF3.</text>
</comment>
<comment type="domain">
    <text evidence="1">The pLxIS motif targets host IRF3 for degradation; however phosphorylation of NSP1 pLxIS motif is not required for its activity.</text>
</comment>
<comment type="similarity">
    <text evidence="1">Belongs to the rotavirus NSP1 family.</text>
</comment>
<protein>
    <recommendedName>
        <fullName evidence="1">Non-structural protein 1</fullName>
        <shortName evidence="1">NSP1</shortName>
    </recommendedName>
    <alternativeName>
        <fullName evidence="1">NCVP2</fullName>
    </alternativeName>
    <alternativeName>
        <fullName evidence="1">Non-structural RNA-binding protein 53</fullName>
        <shortName evidence="1">NS53</shortName>
    </alternativeName>
</protein>
<dbReference type="EMBL" id="L18945">
    <property type="protein sequence ID" value="AAA47332.1"/>
    <property type="molecule type" value="Genomic_RNA"/>
</dbReference>
<dbReference type="EMBL" id="EF672578">
    <property type="protein sequence ID" value="ABV53253.1"/>
    <property type="molecule type" value="Genomic_RNA"/>
</dbReference>
<dbReference type="Proteomes" id="UP000001457">
    <property type="component" value="Genome"/>
</dbReference>
<dbReference type="GO" id="GO:0030430">
    <property type="term" value="C:host cell cytoplasm"/>
    <property type="evidence" value="ECO:0007669"/>
    <property type="project" value="UniProtKB-UniRule"/>
</dbReference>
<dbReference type="GO" id="GO:0044163">
    <property type="term" value="C:host cytoskeleton"/>
    <property type="evidence" value="ECO:0007669"/>
    <property type="project" value="UniProtKB-SubCell"/>
</dbReference>
<dbReference type="GO" id="GO:0046872">
    <property type="term" value="F:metal ion binding"/>
    <property type="evidence" value="ECO:0007669"/>
    <property type="project" value="UniProtKB-UniRule"/>
</dbReference>
<dbReference type="GO" id="GO:0003723">
    <property type="term" value="F:RNA binding"/>
    <property type="evidence" value="ECO:0007669"/>
    <property type="project" value="UniProtKB-UniRule"/>
</dbReference>
<dbReference type="GO" id="GO:0039548">
    <property type="term" value="P:symbiont-mediated suppression of host cytoplasmic pattern recognition receptor signaling pathway via inhibition of IRF3 activity"/>
    <property type="evidence" value="ECO:0007669"/>
    <property type="project" value="UniProtKB-UniRule"/>
</dbReference>
<dbReference type="GO" id="GO:0039557">
    <property type="term" value="P:symbiont-mediated suppression of host cytoplasmic pattern recognition receptor signaling pathway via inhibition of IRF7 activity"/>
    <property type="evidence" value="ECO:0007669"/>
    <property type="project" value="UniProtKB-UniRule"/>
</dbReference>
<dbReference type="HAMAP" id="MF_04088">
    <property type="entry name" value="ROTA_NSP1"/>
    <property type="match status" value="1"/>
</dbReference>
<dbReference type="InterPro" id="IPR002148">
    <property type="entry name" value="Rotavirus_NSP1"/>
</dbReference>
<dbReference type="Pfam" id="PF00981">
    <property type="entry name" value="Rota_NS53"/>
    <property type="match status" value="1"/>
</dbReference>
<accession>P35423</accession>
<accession>B3SRS8</accession>
<proteinExistence type="inferred from homology"/>
<keyword id="KW-1035">Host cytoplasm</keyword>
<keyword id="KW-1037">Host cytoskeleton</keyword>
<keyword id="KW-0945">Host-virus interaction</keyword>
<keyword id="KW-1090">Inhibition of host innate immune response by virus</keyword>
<keyword id="KW-1092">Inhibition of host IRF3 by virus</keyword>
<keyword id="KW-1093">Inhibition of host IRF7 by virus</keyword>
<keyword id="KW-1113">Inhibition of host RLR pathway by virus</keyword>
<keyword id="KW-0922">Interferon antiviral system evasion</keyword>
<keyword id="KW-0479">Metal-binding</keyword>
<keyword id="KW-0694">RNA-binding</keyword>
<keyword id="KW-0899">Viral immunoevasion</keyword>